<gene>
    <name evidence="1" type="primary">rpmD</name>
    <name type="ordered locus">BWG_2993</name>
</gene>
<reference key="1">
    <citation type="journal article" date="2009" name="J. Bacteriol.">
        <title>Genomic sequencing reveals regulatory mutations and recombinational events in the widely used MC4100 lineage of Escherichia coli K-12.</title>
        <authorList>
            <person name="Ferenci T."/>
            <person name="Zhou Z."/>
            <person name="Betteridge T."/>
            <person name="Ren Y."/>
            <person name="Liu Y."/>
            <person name="Feng L."/>
            <person name="Reeves P.R."/>
            <person name="Wang L."/>
        </authorList>
    </citation>
    <scope>NUCLEOTIDE SEQUENCE [LARGE SCALE GENOMIC DNA]</scope>
    <source>
        <strain>K12 / MC4100 / BW2952</strain>
    </source>
</reference>
<sequence length="59" mass="6542">MAKTIKITQTRSAIGRLPKHKATLLGLGLRRIGHTVEREDTPAIRGMINAVSFMVKVEE</sequence>
<accession>C4ZUF7</accession>
<dbReference type="EMBL" id="CP001396">
    <property type="protein sequence ID" value="ACR61867.1"/>
    <property type="molecule type" value="Genomic_DNA"/>
</dbReference>
<dbReference type="RefSeq" id="WP_001140433.1">
    <property type="nucleotide sequence ID" value="NC_012759.1"/>
</dbReference>
<dbReference type="SMR" id="C4ZUF7"/>
<dbReference type="GeneID" id="93778685"/>
<dbReference type="KEGG" id="ebw:BWG_2993"/>
<dbReference type="HOGENOM" id="CLU_131047_1_4_6"/>
<dbReference type="GO" id="GO:0022625">
    <property type="term" value="C:cytosolic large ribosomal subunit"/>
    <property type="evidence" value="ECO:0007669"/>
    <property type="project" value="TreeGrafter"/>
</dbReference>
<dbReference type="GO" id="GO:0003735">
    <property type="term" value="F:structural constituent of ribosome"/>
    <property type="evidence" value="ECO:0007669"/>
    <property type="project" value="InterPro"/>
</dbReference>
<dbReference type="GO" id="GO:0006412">
    <property type="term" value="P:translation"/>
    <property type="evidence" value="ECO:0007669"/>
    <property type="project" value="UniProtKB-UniRule"/>
</dbReference>
<dbReference type="CDD" id="cd01658">
    <property type="entry name" value="Ribosomal_L30"/>
    <property type="match status" value="1"/>
</dbReference>
<dbReference type="FunFam" id="3.30.1390.20:FF:000001">
    <property type="entry name" value="50S ribosomal protein L30"/>
    <property type="match status" value="1"/>
</dbReference>
<dbReference type="Gene3D" id="3.30.1390.20">
    <property type="entry name" value="Ribosomal protein L30, ferredoxin-like fold domain"/>
    <property type="match status" value="1"/>
</dbReference>
<dbReference type="HAMAP" id="MF_01371_B">
    <property type="entry name" value="Ribosomal_uL30_B"/>
    <property type="match status" value="1"/>
</dbReference>
<dbReference type="InterPro" id="IPR036919">
    <property type="entry name" value="Ribo_uL30_ferredoxin-like_sf"/>
</dbReference>
<dbReference type="InterPro" id="IPR005996">
    <property type="entry name" value="Ribosomal_uL30_bac-type"/>
</dbReference>
<dbReference type="InterPro" id="IPR018038">
    <property type="entry name" value="Ribosomal_uL30_CS"/>
</dbReference>
<dbReference type="InterPro" id="IPR016082">
    <property type="entry name" value="Ribosomal_uL30_ferredoxin-like"/>
</dbReference>
<dbReference type="NCBIfam" id="TIGR01308">
    <property type="entry name" value="rpmD_bact"/>
    <property type="match status" value="1"/>
</dbReference>
<dbReference type="PANTHER" id="PTHR15892:SF2">
    <property type="entry name" value="LARGE RIBOSOMAL SUBUNIT PROTEIN UL30M"/>
    <property type="match status" value="1"/>
</dbReference>
<dbReference type="PANTHER" id="PTHR15892">
    <property type="entry name" value="MITOCHONDRIAL RIBOSOMAL PROTEIN L30"/>
    <property type="match status" value="1"/>
</dbReference>
<dbReference type="Pfam" id="PF00327">
    <property type="entry name" value="Ribosomal_L30"/>
    <property type="match status" value="1"/>
</dbReference>
<dbReference type="PIRSF" id="PIRSF002211">
    <property type="entry name" value="Ribosomal_L30_bac-type"/>
    <property type="match status" value="1"/>
</dbReference>
<dbReference type="SUPFAM" id="SSF55129">
    <property type="entry name" value="Ribosomal protein L30p/L7e"/>
    <property type="match status" value="1"/>
</dbReference>
<dbReference type="PROSITE" id="PS00634">
    <property type="entry name" value="RIBOSOMAL_L30"/>
    <property type="match status" value="1"/>
</dbReference>
<name>RL30_ECOBW</name>
<keyword id="KW-0687">Ribonucleoprotein</keyword>
<keyword id="KW-0689">Ribosomal protein</keyword>
<protein>
    <recommendedName>
        <fullName evidence="1">Large ribosomal subunit protein uL30</fullName>
    </recommendedName>
    <alternativeName>
        <fullName evidence="2">50S ribosomal protein L30</fullName>
    </alternativeName>
</protein>
<evidence type="ECO:0000255" key="1">
    <source>
        <dbReference type="HAMAP-Rule" id="MF_01371"/>
    </source>
</evidence>
<evidence type="ECO:0000305" key="2"/>
<comment type="subunit">
    <text evidence="1">Part of the 50S ribosomal subunit.</text>
</comment>
<comment type="similarity">
    <text evidence="1">Belongs to the universal ribosomal protein uL30 family.</text>
</comment>
<feature type="chain" id="PRO_1000215059" description="Large ribosomal subunit protein uL30">
    <location>
        <begin position="1"/>
        <end position="59"/>
    </location>
</feature>
<organism>
    <name type="scientific">Escherichia coli (strain K12 / MC4100 / BW2952)</name>
    <dbReference type="NCBI Taxonomy" id="595496"/>
    <lineage>
        <taxon>Bacteria</taxon>
        <taxon>Pseudomonadati</taxon>
        <taxon>Pseudomonadota</taxon>
        <taxon>Gammaproteobacteria</taxon>
        <taxon>Enterobacterales</taxon>
        <taxon>Enterobacteriaceae</taxon>
        <taxon>Escherichia</taxon>
    </lineage>
</organism>
<proteinExistence type="inferred from homology"/>